<organism>
    <name type="scientific">Azoarcus sp. (strain BH72)</name>
    <dbReference type="NCBI Taxonomy" id="418699"/>
    <lineage>
        <taxon>Bacteria</taxon>
        <taxon>Pseudomonadati</taxon>
        <taxon>Pseudomonadota</taxon>
        <taxon>Betaproteobacteria</taxon>
        <taxon>Rhodocyclales</taxon>
        <taxon>Zoogloeaceae</taxon>
        <taxon>Azoarcus</taxon>
    </lineage>
</organism>
<sequence>MISGLLKKLFGSRNDRLIRQYSQNVRKINALEPEIAALSDEALRGKTGEFRQRLADGATLNDLLPEAFAVVREAGKRVHGMRHFDVQLIGGMVLHDGKIAEMRTGEGKTLVATLAAYLNALPGKGVHVITVNDYLASRDAEMMGRIYGFLGLTTGCNLSRMGHAEKQLAYAADITYGTNNEFGFDYLRDNMVYATGERVQRGLNFAVVDEVDSILIDEARTPLIISGQAEDHTDLYLKMNQVAPLLKRQEGGLDDKDSVIEPGDYTVDLKAHQVLLTEQGHENAEQILVRIGLLPEGAGLYEPGNILLVHHLYAALRAHALYHKDQHYVVQNGEVVIVDEFTGRLMAGRRWSDGLHQAVEAKEGVRIQAENQTLASITFQNYFRMYGKLAGMTGTADTEAFEFHHIYGLETVVIPTNRPMVRKDENDKVYRTAKEKWEAVIADIADCVKRGQPVLVGTTSIETNEYLSGLLNKAKIAHQLLNAKQHDSEAQIVAQAGRPGVVTIATNMAGRGTDIVLGGNIEKPVSQVRDDDSVPAAEKESRIAALREEWRKVHEQVIAAGGLHIIGTERHESRRIDNQLRGRSGRQGDPGSSRFYLSLEDPLMKIFAGERLNAIMVRLKMPEGEAIEHGMVTRSLESAQRKVEQRNFDIRKQLLEYDDVANDQRKVIYQQRNELLETEDISETIQAMRQGVLHDLFRTYVPVDSVEDQWDIAGLEQALASDYLLKLPLLEWVKAEPNLDDEAILKRIIDAGEEAYAAKIAQVDAAAWHQFERNVMLQSLDTHWREHLAALDHLRQGIHLRGYAQKNPKQEYKREAFELFETLLDTVRADVSKLLMTVQIRTEAQLDEAEAPPEMENVQYHHADYDEALAAAAASTAETPVQGGPKVGRNDPCPCGSGKKYKHCHGKLS</sequence>
<reference key="1">
    <citation type="journal article" date="2006" name="Nat. Biotechnol.">
        <title>Complete genome of the mutualistic, N2-fixing grass endophyte Azoarcus sp. strain BH72.</title>
        <authorList>
            <person name="Krause A."/>
            <person name="Ramakumar A."/>
            <person name="Bartels D."/>
            <person name="Battistoni F."/>
            <person name="Bekel T."/>
            <person name="Boch J."/>
            <person name="Boehm M."/>
            <person name="Friedrich F."/>
            <person name="Hurek T."/>
            <person name="Krause L."/>
            <person name="Linke B."/>
            <person name="McHardy A.C."/>
            <person name="Sarkar A."/>
            <person name="Schneiker S."/>
            <person name="Syed A.A."/>
            <person name="Thauer R."/>
            <person name="Vorhoelter F.-J."/>
            <person name="Weidner S."/>
            <person name="Puehler A."/>
            <person name="Reinhold-Hurek B."/>
            <person name="Kaiser O."/>
            <person name="Goesmann A."/>
        </authorList>
    </citation>
    <scope>NUCLEOTIDE SEQUENCE [LARGE SCALE GENOMIC DNA]</scope>
    <source>
        <strain>BH72</strain>
    </source>
</reference>
<comment type="function">
    <text evidence="1">Part of the Sec protein translocase complex. Interacts with the SecYEG preprotein conducting channel. Has a central role in coupling the hydrolysis of ATP to the transfer of proteins into and across the cell membrane, serving both as a receptor for the preprotein-SecB complex and as an ATP-driven molecular motor driving the stepwise translocation of polypeptide chains across the membrane.</text>
</comment>
<comment type="catalytic activity">
    <reaction evidence="1">
        <text>ATP + H2O + cellular proteinSide 1 = ADP + phosphate + cellular proteinSide 2.</text>
        <dbReference type="EC" id="7.4.2.8"/>
    </reaction>
</comment>
<comment type="cofactor">
    <cofactor evidence="1">
        <name>Zn(2+)</name>
        <dbReference type="ChEBI" id="CHEBI:29105"/>
    </cofactor>
    <text evidence="1">May bind 1 zinc ion per subunit.</text>
</comment>
<comment type="subunit">
    <text evidence="1">Monomer and homodimer. Part of the essential Sec protein translocation apparatus which comprises SecA, SecYEG and auxiliary proteins SecDF-YajC and YidC.</text>
</comment>
<comment type="subcellular location">
    <subcellularLocation>
        <location evidence="1">Cell inner membrane</location>
        <topology evidence="1">Peripheral membrane protein</topology>
        <orientation evidence="1">Cytoplasmic side</orientation>
    </subcellularLocation>
    <subcellularLocation>
        <location evidence="1">Cytoplasm</location>
    </subcellularLocation>
    <text evidence="1">Distribution is 50-50.</text>
</comment>
<comment type="similarity">
    <text evidence="1">Belongs to the SecA family.</text>
</comment>
<keyword id="KW-0067">ATP-binding</keyword>
<keyword id="KW-0997">Cell inner membrane</keyword>
<keyword id="KW-1003">Cell membrane</keyword>
<keyword id="KW-0963">Cytoplasm</keyword>
<keyword id="KW-0472">Membrane</keyword>
<keyword id="KW-0479">Metal-binding</keyword>
<keyword id="KW-0547">Nucleotide-binding</keyword>
<keyword id="KW-0653">Protein transport</keyword>
<keyword id="KW-1185">Reference proteome</keyword>
<keyword id="KW-1278">Translocase</keyword>
<keyword id="KW-0811">Translocation</keyword>
<keyword id="KW-0813">Transport</keyword>
<keyword id="KW-0862">Zinc</keyword>
<accession>A1K3V5</accession>
<name>SECA_AZOSB</name>
<feature type="chain" id="PRO_0000320728" description="Protein translocase subunit SecA">
    <location>
        <begin position="1"/>
        <end position="909"/>
    </location>
</feature>
<feature type="region of interest" description="Disordered" evidence="2">
    <location>
        <begin position="879"/>
        <end position="909"/>
    </location>
</feature>
<feature type="compositionally biased region" description="Basic residues" evidence="2">
    <location>
        <begin position="899"/>
        <end position="909"/>
    </location>
</feature>
<feature type="binding site" evidence="1">
    <location>
        <position position="87"/>
    </location>
    <ligand>
        <name>ATP</name>
        <dbReference type="ChEBI" id="CHEBI:30616"/>
    </ligand>
</feature>
<feature type="binding site" evidence="1">
    <location>
        <begin position="105"/>
        <end position="109"/>
    </location>
    <ligand>
        <name>ATP</name>
        <dbReference type="ChEBI" id="CHEBI:30616"/>
    </ligand>
</feature>
<feature type="binding site" evidence="1">
    <location>
        <position position="514"/>
    </location>
    <ligand>
        <name>ATP</name>
        <dbReference type="ChEBI" id="CHEBI:30616"/>
    </ligand>
</feature>
<feature type="binding site" evidence="1">
    <location>
        <position position="893"/>
    </location>
    <ligand>
        <name>Zn(2+)</name>
        <dbReference type="ChEBI" id="CHEBI:29105"/>
    </ligand>
</feature>
<feature type="binding site" evidence="1">
    <location>
        <position position="895"/>
    </location>
    <ligand>
        <name>Zn(2+)</name>
        <dbReference type="ChEBI" id="CHEBI:29105"/>
    </ligand>
</feature>
<feature type="binding site" evidence="1">
    <location>
        <position position="904"/>
    </location>
    <ligand>
        <name>Zn(2+)</name>
        <dbReference type="ChEBI" id="CHEBI:29105"/>
    </ligand>
</feature>
<feature type="binding site" evidence="1">
    <location>
        <position position="905"/>
    </location>
    <ligand>
        <name>Zn(2+)</name>
        <dbReference type="ChEBI" id="CHEBI:29105"/>
    </ligand>
</feature>
<evidence type="ECO:0000255" key="1">
    <source>
        <dbReference type="HAMAP-Rule" id="MF_01382"/>
    </source>
</evidence>
<evidence type="ECO:0000256" key="2">
    <source>
        <dbReference type="SAM" id="MobiDB-lite"/>
    </source>
</evidence>
<gene>
    <name evidence="1" type="primary">secA</name>
    <name type="ordered locus">azo0893</name>
</gene>
<protein>
    <recommendedName>
        <fullName evidence="1">Protein translocase subunit SecA</fullName>
        <ecNumber evidence="1">7.4.2.8</ecNumber>
    </recommendedName>
</protein>
<proteinExistence type="inferred from homology"/>
<dbReference type="EC" id="7.4.2.8" evidence="1"/>
<dbReference type="EMBL" id="AM406670">
    <property type="protein sequence ID" value="CAL93510.1"/>
    <property type="molecule type" value="Genomic_DNA"/>
</dbReference>
<dbReference type="RefSeq" id="WP_011764627.1">
    <property type="nucleotide sequence ID" value="NC_008702.1"/>
</dbReference>
<dbReference type="SMR" id="A1K3V5"/>
<dbReference type="STRING" id="62928.azo0893"/>
<dbReference type="KEGG" id="azo:azo0893"/>
<dbReference type="eggNOG" id="COG0653">
    <property type="taxonomic scope" value="Bacteria"/>
</dbReference>
<dbReference type="HOGENOM" id="CLU_005314_3_0_4"/>
<dbReference type="Proteomes" id="UP000002588">
    <property type="component" value="Chromosome"/>
</dbReference>
<dbReference type="GO" id="GO:0031522">
    <property type="term" value="C:cell envelope Sec protein transport complex"/>
    <property type="evidence" value="ECO:0007669"/>
    <property type="project" value="TreeGrafter"/>
</dbReference>
<dbReference type="GO" id="GO:0005829">
    <property type="term" value="C:cytosol"/>
    <property type="evidence" value="ECO:0007669"/>
    <property type="project" value="TreeGrafter"/>
</dbReference>
<dbReference type="GO" id="GO:0005886">
    <property type="term" value="C:plasma membrane"/>
    <property type="evidence" value="ECO:0007669"/>
    <property type="project" value="UniProtKB-SubCell"/>
</dbReference>
<dbReference type="GO" id="GO:0005524">
    <property type="term" value="F:ATP binding"/>
    <property type="evidence" value="ECO:0007669"/>
    <property type="project" value="UniProtKB-UniRule"/>
</dbReference>
<dbReference type="GO" id="GO:0046872">
    <property type="term" value="F:metal ion binding"/>
    <property type="evidence" value="ECO:0007669"/>
    <property type="project" value="UniProtKB-KW"/>
</dbReference>
<dbReference type="GO" id="GO:0008564">
    <property type="term" value="F:protein-exporting ATPase activity"/>
    <property type="evidence" value="ECO:0007669"/>
    <property type="project" value="UniProtKB-EC"/>
</dbReference>
<dbReference type="GO" id="GO:0065002">
    <property type="term" value="P:intracellular protein transmembrane transport"/>
    <property type="evidence" value="ECO:0007669"/>
    <property type="project" value="UniProtKB-UniRule"/>
</dbReference>
<dbReference type="GO" id="GO:0017038">
    <property type="term" value="P:protein import"/>
    <property type="evidence" value="ECO:0007669"/>
    <property type="project" value="InterPro"/>
</dbReference>
<dbReference type="GO" id="GO:0006605">
    <property type="term" value="P:protein targeting"/>
    <property type="evidence" value="ECO:0007669"/>
    <property type="project" value="UniProtKB-UniRule"/>
</dbReference>
<dbReference type="GO" id="GO:0043952">
    <property type="term" value="P:protein transport by the Sec complex"/>
    <property type="evidence" value="ECO:0007669"/>
    <property type="project" value="TreeGrafter"/>
</dbReference>
<dbReference type="CDD" id="cd17928">
    <property type="entry name" value="DEXDc_SecA"/>
    <property type="match status" value="1"/>
</dbReference>
<dbReference type="CDD" id="cd18803">
    <property type="entry name" value="SF2_C_secA"/>
    <property type="match status" value="1"/>
</dbReference>
<dbReference type="FunFam" id="3.40.50.300:FF:000113">
    <property type="entry name" value="Preprotein translocase subunit SecA"/>
    <property type="match status" value="1"/>
</dbReference>
<dbReference type="FunFam" id="3.90.1440.10:FF:000001">
    <property type="entry name" value="Preprotein translocase subunit SecA"/>
    <property type="match status" value="1"/>
</dbReference>
<dbReference type="FunFam" id="1.10.3060.10:FF:000003">
    <property type="entry name" value="Protein translocase subunit SecA"/>
    <property type="match status" value="1"/>
</dbReference>
<dbReference type="FunFam" id="3.40.50.300:FF:000334">
    <property type="entry name" value="Protein translocase subunit SecA"/>
    <property type="match status" value="1"/>
</dbReference>
<dbReference type="Gene3D" id="1.10.3060.10">
    <property type="entry name" value="Helical scaffold and wing domains of SecA"/>
    <property type="match status" value="1"/>
</dbReference>
<dbReference type="Gene3D" id="3.40.50.300">
    <property type="entry name" value="P-loop containing nucleotide triphosphate hydrolases"/>
    <property type="match status" value="2"/>
</dbReference>
<dbReference type="Gene3D" id="3.90.1440.10">
    <property type="entry name" value="SecA, preprotein cross-linking domain"/>
    <property type="match status" value="1"/>
</dbReference>
<dbReference type="HAMAP" id="MF_01382">
    <property type="entry name" value="SecA"/>
    <property type="match status" value="1"/>
</dbReference>
<dbReference type="InterPro" id="IPR014001">
    <property type="entry name" value="Helicase_ATP-bd"/>
</dbReference>
<dbReference type="InterPro" id="IPR001650">
    <property type="entry name" value="Helicase_C-like"/>
</dbReference>
<dbReference type="InterPro" id="IPR027417">
    <property type="entry name" value="P-loop_NTPase"/>
</dbReference>
<dbReference type="InterPro" id="IPR004027">
    <property type="entry name" value="SEC_C_motif"/>
</dbReference>
<dbReference type="InterPro" id="IPR000185">
    <property type="entry name" value="SecA"/>
</dbReference>
<dbReference type="InterPro" id="IPR020937">
    <property type="entry name" value="SecA_CS"/>
</dbReference>
<dbReference type="InterPro" id="IPR011115">
    <property type="entry name" value="SecA_DEAD"/>
</dbReference>
<dbReference type="InterPro" id="IPR014018">
    <property type="entry name" value="SecA_motor_DEAD"/>
</dbReference>
<dbReference type="InterPro" id="IPR011130">
    <property type="entry name" value="SecA_preprotein_X-link_dom"/>
</dbReference>
<dbReference type="InterPro" id="IPR044722">
    <property type="entry name" value="SecA_SF2_C"/>
</dbReference>
<dbReference type="InterPro" id="IPR011116">
    <property type="entry name" value="SecA_Wing/Scaffold"/>
</dbReference>
<dbReference type="InterPro" id="IPR036266">
    <property type="entry name" value="SecA_Wing/Scaffold_sf"/>
</dbReference>
<dbReference type="InterPro" id="IPR036670">
    <property type="entry name" value="SecA_X-link_sf"/>
</dbReference>
<dbReference type="NCBIfam" id="NF009538">
    <property type="entry name" value="PRK12904.1"/>
    <property type="match status" value="1"/>
</dbReference>
<dbReference type="NCBIfam" id="TIGR00963">
    <property type="entry name" value="secA"/>
    <property type="match status" value="1"/>
</dbReference>
<dbReference type="PANTHER" id="PTHR30612:SF0">
    <property type="entry name" value="CHLOROPLAST PROTEIN-TRANSPORTING ATPASE"/>
    <property type="match status" value="1"/>
</dbReference>
<dbReference type="PANTHER" id="PTHR30612">
    <property type="entry name" value="SECA INNER MEMBRANE COMPONENT OF SEC PROTEIN SECRETION SYSTEM"/>
    <property type="match status" value="1"/>
</dbReference>
<dbReference type="Pfam" id="PF21090">
    <property type="entry name" value="P-loop_SecA"/>
    <property type="match status" value="1"/>
</dbReference>
<dbReference type="Pfam" id="PF02810">
    <property type="entry name" value="SEC-C"/>
    <property type="match status" value="1"/>
</dbReference>
<dbReference type="Pfam" id="PF07517">
    <property type="entry name" value="SecA_DEAD"/>
    <property type="match status" value="1"/>
</dbReference>
<dbReference type="Pfam" id="PF01043">
    <property type="entry name" value="SecA_PP_bind"/>
    <property type="match status" value="1"/>
</dbReference>
<dbReference type="Pfam" id="PF07516">
    <property type="entry name" value="SecA_SW"/>
    <property type="match status" value="1"/>
</dbReference>
<dbReference type="PRINTS" id="PR00906">
    <property type="entry name" value="SECA"/>
</dbReference>
<dbReference type="SMART" id="SM00957">
    <property type="entry name" value="SecA_DEAD"/>
    <property type="match status" value="1"/>
</dbReference>
<dbReference type="SMART" id="SM00958">
    <property type="entry name" value="SecA_PP_bind"/>
    <property type="match status" value="1"/>
</dbReference>
<dbReference type="SUPFAM" id="SSF81886">
    <property type="entry name" value="Helical scaffold and wing domains of SecA"/>
    <property type="match status" value="1"/>
</dbReference>
<dbReference type="SUPFAM" id="SSF52540">
    <property type="entry name" value="P-loop containing nucleoside triphosphate hydrolases"/>
    <property type="match status" value="2"/>
</dbReference>
<dbReference type="SUPFAM" id="SSF81767">
    <property type="entry name" value="Pre-protein crosslinking domain of SecA"/>
    <property type="match status" value="1"/>
</dbReference>
<dbReference type="PROSITE" id="PS01312">
    <property type="entry name" value="SECA"/>
    <property type="match status" value="1"/>
</dbReference>
<dbReference type="PROSITE" id="PS51196">
    <property type="entry name" value="SECA_MOTOR_DEAD"/>
    <property type="match status" value="1"/>
</dbReference>